<gene>
    <name type="ordered locus">MT2743</name>
</gene>
<organism>
    <name type="scientific">Mycobacterium tuberculosis (strain CDC 1551 / Oshkosh)</name>
    <dbReference type="NCBI Taxonomy" id="83331"/>
    <lineage>
        <taxon>Bacteria</taxon>
        <taxon>Bacillati</taxon>
        <taxon>Actinomycetota</taxon>
        <taxon>Actinomycetes</taxon>
        <taxon>Mycobacteriales</taxon>
        <taxon>Mycobacteriaceae</taxon>
        <taxon>Mycobacterium</taxon>
        <taxon>Mycobacterium tuberculosis complex</taxon>
    </lineage>
</organism>
<name>Y2669_MYCTO</name>
<protein>
    <recommendedName>
        <fullName>Uncharacterized N-acetyltransferase MT2743</fullName>
        <ecNumber>2.3.1.-</ecNumber>
    </recommendedName>
</protein>
<reference key="1">
    <citation type="journal article" date="2002" name="J. Bacteriol.">
        <title>Whole-genome comparison of Mycobacterium tuberculosis clinical and laboratory strains.</title>
        <authorList>
            <person name="Fleischmann R.D."/>
            <person name="Alland D."/>
            <person name="Eisen J.A."/>
            <person name="Carpenter L."/>
            <person name="White O."/>
            <person name="Peterson J.D."/>
            <person name="DeBoy R.T."/>
            <person name="Dodson R.J."/>
            <person name="Gwinn M.L."/>
            <person name="Haft D.H."/>
            <person name="Hickey E.K."/>
            <person name="Kolonay J.F."/>
            <person name="Nelson W.C."/>
            <person name="Umayam L.A."/>
            <person name="Ermolaeva M.D."/>
            <person name="Salzberg S.L."/>
            <person name="Delcher A."/>
            <person name="Utterback T.R."/>
            <person name="Weidman J.F."/>
            <person name="Khouri H.M."/>
            <person name="Gill J."/>
            <person name="Mikula A."/>
            <person name="Bishai W."/>
            <person name="Jacobs W.R. Jr."/>
            <person name="Venter J.C."/>
            <person name="Fraser C.M."/>
        </authorList>
    </citation>
    <scope>NUCLEOTIDE SEQUENCE [LARGE SCALE GENOMIC DNA]</scope>
    <source>
        <strain>CDC 1551 / Oshkosh</strain>
    </source>
</reference>
<accession>P9WQG4</accession>
<accession>L0TD77</accession>
<accession>P63425</accession>
<accession>P71966</accession>
<proteinExistence type="inferred from homology"/>
<sequence length="156" mass="17195">MTDADELAAVAARTFPLACPPAVAPEHIASFVDANLSSARFAEYLTDPRRAILTARHDGRIVGYAMLIRGDDRDVELSKLYLLPGYHGTGAAAALMHKVLATAADWGALRVWLGVNQKNQRAQRFYAKTGFKINGTRTFRLGAHHENDYVMVRELV</sequence>
<comment type="similarity">
    <text evidence="2">Belongs to the acetyltransferase family.</text>
</comment>
<evidence type="ECO:0000255" key="1">
    <source>
        <dbReference type="PROSITE-ProRule" id="PRU00532"/>
    </source>
</evidence>
<evidence type="ECO:0000305" key="2"/>
<keyword id="KW-0012">Acyltransferase</keyword>
<keyword id="KW-1185">Reference proteome</keyword>
<keyword id="KW-0808">Transferase</keyword>
<feature type="chain" id="PRO_0000426779" description="Uncharacterized N-acetyltransferase MT2743">
    <location>
        <begin position="1"/>
        <end position="156"/>
    </location>
</feature>
<feature type="domain" description="N-acetyltransferase" evidence="1">
    <location>
        <begin position="10"/>
        <end position="156"/>
    </location>
</feature>
<dbReference type="EC" id="2.3.1.-"/>
<dbReference type="EMBL" id="AE000516">
    <property type="protein sequence ID" value="AAK47058.1"/>
    <property type="molecule type" value="Genomic_DNA"/>
</dbReference>
<dbReference type="PIR" id="A70968">
    <property type="entry name" value="A70968"/>
</dbReference>
<dbReference type="RefSeq" id="WP_003413852.1">
    <property type="nucleotide sequence ID" value="NZ_KK341227.1"/>
</dbReference>
<dbReference type="SMR" id="P9WQG4"/>
<dbReference type="KEGG" id="mtc:MT2743"/>
<dbReference type="PATRIC" id="fig|83331.31.peg.2954"/>
<dbReference type="HOGENOM" id="CLU_013985_18_0_11"/>
<dbReference type="Proteomes" id="UP000001020">
    <property type="component" value="Chromosome"/>
</dbReference>
<dbReference type="GO" id="GO:0016747">
    <property type="term" value="F:acyltransferase activity, transferring groups other than amino-acyl groups"/>
    <property type="evidence" value="ECO:0007669"/>
    <property type="project" value="InterPro"/>
</dbReference>
<dbReference type="CDD" id="cd04301">
    <property type="entry name" value="NAT_SF"/>
    <property type="match status" value="1"/>
</dbReference>
<dbReference type="FunFam" id="3.40.630.30:FF:000152">
    <property type="entry name" value="Uncharacterized N-acetyltransferase MT2743"/>
    <property type="match status" value="1"/>
</dbReference>
<dbReference type="Gene3D" id="3.40.630.30">
    <property type="match status" value="1"/>
</dbReference>
<dbReference type="InterPro" id="IPR016181">
    <property type="entry name" value="Acyl_CoA_acyltransferase"/>
</dbReference>
<dbReference type="InterPro" id="IPR050832">
    <property type="entry name" value="Bact_Acetyltransf"/>
</dbReference>
<dbReference type="InterPro" id="IPR000182">
    <property type="entry name" value="GNAT_dom"/>
</dbReference>
<dbReference type="PANTHER" id="PTHR43877">
    <property type="entry name" value="AMINOALKYLPHOSPHONATE N-ACETYLTRANSFERASE-RELATED-RELATED"/>
    <property type="match status" value="1"/>
</dbReference>
<dbReference type="Pfam" id="PF00583">
    <property type="entry name" value="Acetyltransf_1"/>
    <property type="match status" value="1"/>
</dbReference>
<dbReference type="SUPFAM" id="SSF55729">
    <property type="entry name" value="Acyl-CoA N-acyltransferases (Nat)"/>
    <property type="match status" value="1"/>
</dbReference>
<dbReference type="PROSITE" id="PS51186">
    <property type="entry name" value="GNAT"/>
    <property type="match status" value="1"/>
</dbReference>